<sequence length="424" mass="47029">MAKNIQAIRGMNDYLPGETAIWQRIEGTLKNVLGSYGYSEIRLPIVEQTPLFKRAIGEVTDVVEKEMYTFEDRNGDSLTLRPEGTAGCVRAGIEHGLLYNQEQRLWYIGPMFRHERPQKGRYRQFHQLGCEVFGLQGPDIDAELIMLTARWWRALGISEHVTLELNSIGSLEARANYRDALVAFLEQHKEKLDEDCKRRMYTNPLRVLDSKNPEVQALLNDAPALGDYLDEESREHFAGLCKLLESAGIAYTVNQRLVRGLDYYNRTVFEWVTNSLGSQGTVCAGGRYDGLVEQLGGRATPAVGFAMGLERLVLLVQAVNPEFKADPVVDIYLVASGADTQSAAMALAERLRDELPGVKLMTNHGGGNFKKQFARADKWGARVAVVLGESEVANGTAVVKDLRSGEQTAVAQDSVAAHLRTLLG</sequence>
<organism>
    <name type="scientific">Escherichia coli O8 (strain IAI1)</name>
    <dbReference type="NCBI Taxonomy" id="585034"/>
    <lineage>
        <taxon>Bacteria</taxon>
        <taxon>Pseudomonadati</taxon>
        <taxon>Pseudomonadota</taxon>
        <taxon>Gammaproteobacteria</taxon>
        <taxon>Enterobacterales</taxon>
        <taxon>Enterobacteriaceae</taxon>
        <taxon>Escherichia</taxon>
    </lineage>
</organism>
<evidence type="ECO:0000255" key="1">
    <source>
        <dbReference type="HAMAP-Rule" id="MF_00127"/>
    </source>
</evidence>
<accession>B7M7L8</accession>
<comment type="catalytic activity">
    <reaction evidence="1">
        <text>tRNA(His) + L-histidine + ATP = L-histidyl-tRNA(His) + AMP + diphosphate + H(+)</text>
        <dbReference type="Rhea" id="RHEA:17313"/>
        <dbReference type="Rhea" id="RHEA-COMP:9665"/>
        <dbReference type="Rhea" id="RHEA-COMP:9689"/>
        <dbReference type="ChEBI" id="CHEBI:15378"/>
        <dbReference type="ChEBI" id="CHEBI:30616"/>
        <dbReference type="ChEBI" id="CHEBI:33019"/>
        <dbReference type="ChEBI" id="CHEBI:57595"/>
        <dbReference type="ChEBI" id="CHEBI:78442"/>
        <dbReference type="ChEBI" id="CHEBI:78527"/>
        <dbReference type="ChEBI" id="CHEBI:456215"/>
        <dbReference type="EC" id="6.1.1.21"/>
    </reaction>
</comment>
<comment type="subunit">
    <text evidence="1">Homodimer.</text>
</comment>
<comment type="subcellular location">
    <subcellularLocation>
        <location evidence="1">Cytoplasm</location>
    </subcellularLocation>
</comment>
<comment type="similarity">
    <text evidence="1">Belongs to the class-II aminoacyl-tRNA synthetase family.</text>
</comment>
<protein>
    <recommendedName>
        <fullName evidence="1">Histidine--tRNA ligase</fullName>
        <ecNumber evidence="1">6.1.1.21</ecNumber>
    </recommendedName>
    <alternativeName>
        <fullName evidence="1">Histidyl-tRNA synthetase</fullName>
        <shortName evidence="1">HisRS</shortName>
    </alternativeName>
</protein>
<dbReference type="EC" id="6.1.1.21" evidence="1"/>
<dbReference type="EMBL" id="CU928160">
    <property type="protein sequence ID" value="CAQ99406.1"/>
    <property type="molecule type" value="Genomic_DNA"/>
</dbReference>
<dbReference type="RefSeq" id="WP_001107167.1">
    <property type="nucleotide sequence ID" value="NC_011741.1"/>
</dbReference>
<dbReference type="SMR" id="B7M7L8"/>
<dbReference type="GeneID" id="75206207"/>
<dbReference type="KEGG" id="ecr:ECIAI1_2566"/>
<dbReference type="HOGENOM" id="CLU_025113_1_1_6"/>
<dbReference type="GO" id="GO:0005737">
    <property type="term" value="C:cytoplasm"/>
    <property type="evidence" value="ECO:0007669"/>
    <property type="project" value="UniProtKB-SubCell"/>
</dbReference>
<dbReference type="GO" id="GO:0005524">
    <property type="term" value="F:ATP binding"/>
    <property type="evidence" value="ECO:0007669"/>
    <property type="project" value="UniProtKB-UniRule"/>
</dbReference>
<dbReference type="GO" id="GO:0004821">
    <property type="term" value="F:histidine-tRNA ligase activity"/>
    <property type="evidence" value="ECO:0007669"/>
    <property type="project" value="UniProtKB-UniRule"/>
</dbReference>
<dbReference type="GO" id="GO:0006427">
    <property type="term" value="P:histidyl-tRNA aminoacylation"/>
    <property type="evidence" value="ECO:0007669"/>
    <property type="project" value="UniProtKB-UniRule"/>
</dbReference>
<dbReference type="CDD" id="cd00773">
    <property type="entry name" value="HisRS-like_core"/>
    <property type="match status" value="1"/>
</dbReference>
<dbReference type="CDD" id="cd00859">
    <property type="entry name" value="HisRS_anticodon"/>
    <property type="match status" value="1"/>
</dbReference>
<dbReference type="FunFam" id="3.30.930.10:FF:000005">
    <property type="entry name" value="Histidine--tRNA ligase"/>
    <property type="match status" value="1"/>
</dbReference>
<dbReference type="FunFam" id="3.40.50.800:FF:000007">
    <property type="entry name" value="Histidine--tRNA ligase"/>
    <property type="match status" value="1"/>
</dbReference>
<dbReference type="Gene3D" id="3.40.50.800">
    <property type="entry name" value="Anticodon-binding domain"/>
    <property type="match status" value="1"/>
</dbReference>
<dbReference type="Gene3D" id="3.30.930.10">
    <property type="entry name" value="Bira Bifunctional Protein, Domain 2"/>
    <property type="match status" value="1"/>
</dbReference>
<dbReference type="HAMAP" id="MF_00127">
    <property type="entry name" value="His_tRNA_synth"/>
    <property type="match status" value="1"/>
</dbReference>
<dbReference type="InterPro" id="IPR006195">
    <property type="entry name" value="aa-tRNA-synth_II"/>
</dbReference>
<dbReference type="InterPro" id="IPR045864">
    <property type="entry name" value="aa-tRNA-synth_II/BPL/LPL"/>
</dbReference>
<dbReference type="InterPro" id="IPR004154">
    <property type="entry name" value="Anticodon-bd"/>
</dbReference>
<dbReference type="InterPro" id="IPR036621">
    <property type="entry name" value="Anticodon-bd_dom_sf"/>
</dbReference>
<dbReference type="InterPro" id="IPR015807">
    <property type="entry name" value="His-tRNA-ligase"/>
</dbReference>
<dbReference type="InterPro" id="IPR041715">
    <property type="entry name" value="HisRS-like_core"/>
</dbReference>
<dbReference type="InterPro" id="IPR004516">
    <property type="entry name" value="HisRS/HisZ"/>
</dbReference>
<dbReference type="InterPro" id="IPR033656">
    <property type="entry name" value="HisRS_anticodon"/>
</dbReference>
<dbReference type="NCBIfam" id="TIGR00442">
    <property type="entry name" value="hisS"/>
    <property type="match status" value="1"/>
</dbReference>
<dbReference type="PANTHER" id="PTHR43707:SF1">
    <property type="entry name" value="HISTIDINE--TRNA LIGASE, MITOCHONDRIAL-RELATED"/>
    <property type="match status" value="1"/>
</dbReference>
<dbReference type="PANTHER" id="PTHR43707">
    <property type="entry name" value="HISTIDYL-TRNA SYNTHETASE"/>
    <property type="match status" value="1"/>
</dbReference>
<dbReference type="Pfam" id="PF03129">
    <property type="entry name" value="HGTP_anticodon"/>
    <property type="match status" value="1"/>
</dbReference>
<dbReference type="Pfam" id="PF13393">
    <property type="entry name" value="tRNA-synt_His"/>
    <property type="match status" value="1"/>
</dbReference>
<dbReference type="PIRSF" id="PIRSF001549">
    <property type="entry name" value="His-tRNA_synth"/>
    <property type="match status" value="1"/>
</dbReference>
<dbReference type="SUPFAM" id="SSF52954">
    <property type="entry name" value="Class II aaRS ABD-related"/>
    <property type="match status" value="1"/>
</dbReference>
<dbReference type="SUPFAM" id="SSF55681">
    <property type="entry name" value="Class II aaRS and biotin synthetases"/>
    <property type="match status" value="1"/>
</dbReference>
<dbReference type="PROSITE" id="PS50862">
    <property type="entry name" value="AA_TRNA_LIGASE_II"/>
    <property type="match status" value="1"/>
</dbReference>
<proteinExistence type="inferred from homology"/>
<keyword id="KW-0030">Aminoacyl-tRNA synthetase</keyword>
<keyword id="KW-0067">ATP-binding</keyword>
<keyword id="KW-0963">Cytoplasm</keyword>
<keyword id="KW-0436">Ligase</keyword>
<keyword id="KW-0547">Nucleotide-binding</keyword>
<keyword id="KW-0648">Protein biosynthesis</keyword>
<feature type="chain" id="PRO_1000199135" description="Histidine--tRNA ligase">
    <location>
        <begin position="1"/>
        <end position="424"/>
    </location>
</feature>
<name>SYH_ECO8A</name>
<reference key="1">
    <citation type="journal article" date="2009" name="PLoS Genet.">
        <title>Organised genome dynamics in the Escherichia coli species results in highly diverse adaptive paths.</title>
        <authorList>
            <person name="Touchon M."/>
            <person name="Hoede C."/>
            <person name="Tenaillon O."/>
            <person name="Barbe V."/>
            <person name="Baeriswyl S."/>
            <person name="Bidet P."/>
            <person name="Bingen E."/>
            <person name="Bonacorsi S."/>
            <person name="Bouchier C."/>
            <person name="Bouvet O."/>
            <person name="Calteau A."/>
            <person name="Chiapello H."/>
            <person name="Clermont O."/>
            <person name="Cruveiller S."/>
            <person name="Danchin A."/>
            <person name="Diard M."/>
            <person name="Dossat C."/>
            <person name="Karoui M.E."/>
            <person name="Frapy E."/>
            <person name="Garry L."/>
            <person name="Ghigo J.M."/>
            <person name="Gilles A.M."/>
            <person name="Johnson J."/>
            <person name="Le Bouguenec C."/>
            <person name="Lescat M."/>
            <person name="Mangenot S."/>
            <person name="Martinez-Jehanne V."/>
            <person name="Matic I."/>
            <person name="Nassif X."/>
            <person name="Oztas S."/>
            <person name="Petit M.A."/>
            <person name="Pichon C."/>
            <person name="Rouy Z."/>
            <person name="Ruf C.S."/>
            <person name="Schneider D."/>
            <person name="Tourret J."/>
            <person name="Vacherie B."/>
            <person name="Vallenet D."/>
            <person name="Medigue C."/>
            <person name="Rocha E.P.C."/>
            <person name="Denamur E."/>
        </authorList>
    </citation>
    <scope>NUCLEOTIDE SEQUENCE [LARGE SCALE GENOMIC DNA]</scope>
    <source>
        <strain>IAI1</strain>
    </source>
</reference>
<gene>
    <name evidence="1" type="primary">hisS</name>
    <name type="ordered locus">ECIAI1_2566</name>
</gene>